<feature type="initiator methionine" description="Removed" evidence="1">
    <location>
        <position position="1"/>
    </location>
</feature>
<feature type="chain" id="PRO_0000170882" description="Formamidopyrimidine-DNA glycosylase">
    <location>
        <begin position="2"/>
        <end position="269"/>
    </location>
</feature>
<feature type="zinc finger region" description="FPG-type" evidence="2">
    <location>
        <begin position="235"/>
        <end position="269"/>
    </location>
</feature>
<feature type="active site" description="Schiff-base intermediate with DNA" evidence="2">
    <location>
        <position position="2"/>
    </location>
</feature>
<feature type="active site" description="Proton donor" evidence="2">
    <location>
        <position position="3"/>
    </location>
</feature>
<feature type="active site" description="Proton donor; for beta-elimination activity" evidence="2">
    <location>
        <position position="57"/>
    </location>
</feature>
<feature type="active site" description="Proton donor; for delta-elimination activity" evidence="2">
    <location>
        <position position="259"/>
    </location>
</feature>
<feature type="binding site" evidence="2">
    <location>
        <position position="90"/>
    </location>
    <ligand>
        <name>DNA</name>
        <dbReference type="ChEBI" id="CHEBI:16991"/>
    </ligand>
</feature>
<feature type="binding site" evidence="2">
    <location>
        <position position="109"/>
    </location>
    <ligand>
        <name>DNA</name>
        <dbReference type="ChEBI" id="CHEBI:16991"/>
    </ligand>
</feature>
<feature type="binding site" evidence="2">
    <location>
        <position position="150"/>
    </location>
    <ligand>
        <name>DNA</name>
        <dbReference type="ChEBI" id="CHEBI:16991"/>
    </ligand>
</feature>
<evidence type="ECO:0000250" key="1"/>
<evidence type="ECO:0000255" key="2">
    <source>
        <dbReference type="HAMAP-Rule" id="MF_00103"/>
    </source>
</evidence>
<reference key="1">
    <citation type="journal article" date="2000" name="Nature">
        <title>DNA sequence of both chromosomes of the cholera pathogen Vibrio cholerae.</title>
        <authorList>
            <person name="Heidelberg J.F."/>
            <person name="Eisen J.A."/>
            <person name="Nelson W.C."/>
            <person name="Clayton R.A."/>
            <person name="Gwinn M.L."/>
            <person name="Dodson R.J."/>
            <person name="Haft D.H."/>
            <person name="Hickey E.K."/>
            <person name="Peterson J.D."/>
            <person name="Umayam L.A."/>
            <person name="Gill S.R."/>
            <person name="Nelson K.E."/>
            <person name="Read T.D."/>
            <person name="Tettelin H."/>
            <person name="Richardson D.L."/>
            <person name="Ermolaeva M.D."/>
            <person name="Vamathevan J.J."/>
            <person name="Bass S."/>
            <person name="Qin H."/>
            <person name="Dragoi I."/>
            <person name="Sellers P."/>
            <person name="McDonald L.A."/>
            <person name="Utterback T.R."/>
            <person name="Fleischmann R.D."/>
            <person name="Nierman W.C."/>
            <person name="White O."/>
            <person name="Salzberg S.L."/>
            <person name="Smith H.O."/>
            <person name="Colwell R.R."/>
            <person name="Mekalanos J.J."/>
            <person name="Venter J.C."/>
            <person name="Fraser C.M."/>
        </authorList>
    </citation>
    <scope>NUCLEOTIDE SEQUENCE [LARGE SCALE GENOMIC DNA]</scope>
    <source>
        <strain>ATCC 39315 / El Tor Inaba N16961</strain>
    </source>
</reference>
<keyword id="KW-0227">DNA damage</keyword>
<keyword id="KW-0234">DNA repair</keyword>
<keyword id="KW-0238">DNA-binding</keyword>
<keyword id="KW-0326">Glycosidase</keyword>
<keyword id="KW-0378">Hydrolase</keyword>
<keyword id="KW-0456">Lyase</keyword>
<keyword id="KW-0479">Metal-binding</keyword>
<keyword id="KW-0511">Multifunctional enzyme</keyword>
<keyword id="KW-1185">Reference proteome</keyword>
<keyword id="KW-0862">Zinc</keyword>
<keyword id="KW-0863">Zinc-finger</keyword>
<protein>
    <recommendedName>
        <fullName evidence="2">Formamidopyrimidine-DNA glycosylase</fullName>
        <shortName evidence="2">Fapy-DNA glycosylase</shortName>
        <ecNumber evidence="2">3.2.2.23</ecNumber>
    </recommendedName>
    <alternativeName>
        <fullName evidence="2">DNA-(apurinic or apyrimidinic site) lyase MutM</fullName>
        <shortName evidence="2">AP lyase MutM</shortName>
        <ecNumber evidence="2">4.2.99.18</ecNumber>
    </alternativeName>
</protein>
<proteinExistence type="inferred from homology"/>
<sequence>MPELPEVEVSRLGISPHLVGGTIQSLVLRTPKLRWPIPQELKQLEGQTILAIHRRAKYLIIETAVGSAIVHLGMSGSLRILDGDFPAAKHDHVDLVMTSGKRLRYNDPRRFGAWLWCAPDESHEVLGRLGPEPLTEAFNAEYMMDKARNKRIAVKAFIMDNAAVVGVGNIYANESLFTSRLHPLRPAHSLSLEEWQTLVANIKQVLQVAIKQGGTTLKDFTQSDGKPGYFAQELQVYGKAKQPCPHCGEPLCEQKIAQRNTFFCPQCQH</sequence>
<organism>
    <name type="scientific">Vibrio cholerae serotype O1 (strain ATCC 39315 / El Tor Inaba N16961)</name>
    <dbReference type="NCBI Taxonomy" id="243277"/>
    <lineage>
        <taxon>Bacteria</taxon>
        <taxon>Pseudomonadati</taxon>
        <taxon>Pseudomonadota</taxon>
        <taxon>Gammaproteobacteria</taxon>
        <taxon>Vibrionales</taxon>
        <taxon>Vibrionaceae</taxon>
        <taxon>Vibrio</taxon>
    </lineage>
</organism>
<dbReference type="EC" id="3.2.2.23" evidence="2"/>
<dbReference type="EC" id="4.2.99.18" evidence="2"/>
<dbReference type="EMBL" id="AE003852">
    <property type="protein sequence ID" value="AAF93397.1"/>
    <property type="molecule type" value="Genomic_DNA"/>
</dbReference>
<dbReference type="PIR" id="G82347">
    <property type="entry name" value="G82347"/>
</dbReference>
<dbReference type="RefSeq" id="NP_229878.1">
    <property type="nucleotide sequence ID" value="NC_002505.1"/>
</dbReference>
<dbReference type="RefSeq" id="WP_001114647.1">
    <property type="nucleotide sequence ID" value="NZ_LT906614.1"/>
</dbReference>
<dbReference type="SMR" id="Q9KVC5"/>
<dbReference type="STRING" id="243277.VC_0221"/>
<dbReference type="DNASU" id="2614281"/>
<dbReference type="EnsemblBacteria" id="AAF93397">
    <property type="protein sequence ID" value="AAF93397"/>
    <property type="gene ID" value="VC_0221"/>
</dbReference>
<dbReference type="KEGG" id="vch:VC_0221"/>
<dbReference type="PATRIC" id="fig|243277.26.peg.203"/>
<dbReference type="eggNOG" id="COG0266">
    <property type="taxonomic scope" value="Bacteria"/>
</dbReference>
<dbReference type="HOGENOM" id="CLU_038423_1_1_6"/>
<dbReference type="Proteomes" id="UP000000584">
    <property type="component" value="Chromosome 1"/>
</dbReference>
<dbReference type="GO" id="GO:0034039">
    <property type="term" value="F:8-oxo-7,8-dihydroguanine DNA N-glycosylase activity"/>
    <property type="evidence" value="ECO:0000318"/>
    <property type="project" value="GO_Central"/>
</dbReference>
<dbReference type="GO" id="GO:0140078">
    <property type="term" value="F:class I DNA-(apurinic or apyrimidinic site) endonuclease activity"/>
    <property type="evidence" value="ECO:0007669"/>
    <property type="project" value="UniProtKB-EC"/>
</dbReference>
<dbReference type="GO" id="GO:0003684">
    <property type="term" value="F:damaged DNA binding"/>
    <property type="evidence" value="ECO:0007669"/>
    <property type="project" value="InterPro"/>
</dbReference>
<dbReference type="GO" id="GO:0003906">
    <property type="term" value="F:DNA-(apurinic or apyrimidinic site) endonuclease activity"/>
    <property type="evidence" value="ECO:0000318"/>
    <property type="project" value="GO_Central"/>
</dbReference>
<dbReference type="GO" id="GO:0008270">
    <property type="term" value="F:zinc ion binding"/>
    <property type="evidence" value="ECO:0007669"/>
    <property type="project" value="UniProtKB-UniRule"/>
</dbReference>
<dbReference type="GO" id="GO:0006284">
    <property type="term" value="P:base-excision repair"/>
    <property type="evidence" value="ECO:0000318"/>
    <property type="project" value="GO_Central"/>
</dbReference>
<dbReference type="CDD" id="cd08966">
    <property type="entry name" value="EcFpg-like_N"/>
    <property type="match status" value="1"/>
</dbReference>
<dbReference type="FunFam" id="1.10.8.50:FF:000003">
    <property type="entry name" value="Formamidopyrimidine-DNA glycosylase"/>
    <property type="match status" value="1"/>
</dbReference>
<dbReference type="FunFam" id="3.20.190.10:FF:000001">
    <property type="entry name" value="Formamidopyrimidine-DNA glycosylase"/>
    <property type="match status" value="1"/>
</dbReference>
<dbReference type="Gene3D" id="1.10.8.50">
    <property type="match status" value="1"/>
</dbReference>
<dbReference type="Gene3D" id="3.20.190.10">
    <property type="entry name" value="MutM-like, N-terminal"/>
    <property type="match status" value="1"/>
</dbReference>
<dbReference type="HAMAP" id="MF_00103">
    <property type="entry name" value="Fapy_DNA_glycosyl"/>
    <property type="match status" value="1"/>
</dbReference>
<dbReference type="InterPro" id="IPR015886">
    <property type="entry name" value="DNA_glyclase/AP_lyase_DNA-bd"/>
</dbReference>
<dbReference type="InterPro" id="IPR015887">
    <property type="entry name" value="DNA_glyclase_Znf_dom_DNA_BS"/>
</dbReference>
<dbReference type="InterPro" id="IPR020629">
    <property type="entry name" value="Formamido-pyr_DNA_Glyclase"/>
</dbReference>
<dbReference type="InterPro" id="IPR012319">
    <property type="entry name" value="FPG_cat"/>
</dbReference>
<dbReference type="InterPro" id="IPR035937">
    <property type="entry name" value="MutM-like_N-ter"/>
</dbReference>
<dbReference type="InterPro" id="IPR010979">
    <property type="entry name" value="Ribosomal_uS13-like_H2TH"/>
</dbReference>
<dbReference type="InterPro" id="IPR000214">
    <property type="entry name" value="Znf_DNA_glyclase/AP_lyase"/>
</dbReference>
<dbReference type="InterPro" id="IPR010663">
    <property type="entry name" value="Znf_FPG/IleRS"/>
</dbReference>
<dbReference type="NCBIfam" id="TIGR00577">
    <property type="entry name" value="fpg"/>
    <property type="match status" value="1"/>
</dbReference>
<dbReference type="NCBIfam" id="NF002211">
    <property type="entry name" value="PRK01103.1"/>
    <property type="match status" value="1"/>
</dbReference>
<dbReference type="PANTHER" id="PTHR22993">
    <property type="entry name" value="FORMAMIDOPYRIMIDINE-DNA GLYCOSYLASE"/>
    <property type="match status" value="1"/>
</dbReference>
<dbReference type="PANTHER" id="PTHR22993:SF9">
    <property type="entry name" value="FORMAMIDOPYRIMIDINE-DNA GLYCOSYLASE"/>
    <property type="match status" value="1"/>
</dbReference>
<dbReference type="Pfam" id="PF01149">
    <property type="entry name" value="Fapy_DNA_glyco"/>
    <property type="match status" value="1"/>
</dbReference>
<dbReference type="Pfam" id="PF06831">
    <property type="entry name" value="H2TH"/>
    <property type="match status" value="1"/>
</dbReference>
<dbReference type="Pfam" id="PF06827">
    <property type="entry name" value="zf-FPG_IleRS"/>
    <property type="match status" value="1"/>
</dbReference>
<dbReference type="SMART" id="SM00898">
    <property type="entry name" value="Fapy_DNA_glyco"/>
    <property type="match status" value="1"/>
</dbReference>
<dbReference type="SMART" id="SM01232">
    <property type="entry name" value="H2TH"/>
    <property type="match status" value="1"/>
</dbReference>
<dbReference type="SUPFAM" id="SSF57716">
    <property type="entry name" value="Glucocorticoid receptor-like (DNA-binding domain)"/>
    <property type="match status" value="1"/>
</dbReference>
<dbReference type="SUPFAM" id="SSF81624">
    <property type="entry name" value="N-terminal domain of MutM-like DNA repair proteins"/>
    <property type="match status" value="1"/>
</dbReference>
<dbReference type="SUPFAM" id="SSF46946">
    <property type="entry name" value="S13-like H2TH domain"/>
    <property type="match status" value="1"/>
</dbReference>
<dbReference type="PROSITE" id="PS51068">
    <property type="entry name" value="FPG_CAT"/>
    <property type="match status" value="1"/>
</dbReference>
<dbReference type="PROSITE" id="PS01242">
    <property type="entry name" value="ZF_FPG_1"/>
    <property type="match status" value="1"/>
</dbReference>
<dbReference type="PROSITE" id="PS51066">
    <property type="entry name" value="ZF_FPG_2"/>
    <property type="match status" value="1"/>
</dbReference>
<comment type="function">
    <text evidence="2">Involved in base excision repair of DNA damaged by oxidation or by mutagenic agents. Acts as a DNA glycosylase that recognizes and removes damaged bases. Has a preference for oxidized purines, such as 7,8-dihydro-8-oxoguanine (8-oxoG). Has AP (apurinic/apyrimidinic) lyase activity and introduces nicks in the DNA strand. Cleaves the DNA backbone by beta-delta elimination to generate a single-strand break at the site of the removed base with both 3'- and 5'-phosphates.</text>
</comment>
<comment type="catalytic activity">
    <reaction evidence="2">
        <text>Hydrolysis of DNA containing ring-opened 7-methylguanine residues, releasing 2,6-diamino-4-hydroxy-5-(N-methyl)formamidopyrimidine.</text>
        <dbReference type="EC" id="3.2.2.23"/>
    </reaction>
</comment>
<comment type="catalytic activity">
    <reaction evidence="2">
        <text>2'-deoxyribonucleotide-(2'-deoxyribose 5'-phosphate)-2'-deoxyribonucleotide-DNA = a 3'-end 2'-deoxyribonucleotide-(2,3-dehydro-2,3-deoxyribose 5'-phosphate)-DNA + a 5'-end 5'-phospho-2'-deoxyribonucleoside-DNA + H(+)</text>
        <dbReference type="Rhea" id="RHEA:66592"/>
        <dbReference type="Rhea" id="RHEA-COMP:13180"/>
        <dbReference type="Rhea" id="RHEA-COMP:16897"/>
        <dbReference type="Rhea" id="RHEA-COMP:17067"/>
        <dbReference type="ChEBI" id="CHEBI:15378"/>
        <dbReference type="ChEBI" id="CHEBI:136412"/>
        <dbReference type="ChEBI" id="CHEBI:157695"/>
        <dbReference type="ChEBI" id="CHEBI:167181"/>
        <dbReference type="EC" id="4.2.99.18"/>
    </reaction>
</comment>
<comment type="cofactor">
    <cofactor evidence="2">
        <name>Zn(2+)</name>
        <dbReference type="ChEBI" id="CHEBI:29105"/>
    </cofactor>
    <text evidence="2">Binds 1 zinc ion per subunit.</text>
</comment>
<comment type="subunit">
    <text evidence="2">Monomer.</text>
</comment>
<comment type="similarity">
    <text evidence="2">Belongs to the FPG family.</text>
</comment>
<gene>
    <name evidence="2" type="primary">mutM</name>
    <name evidence="2" type="synonym">fpg</name>
    <name type="ordered locus">VC_0221</name>
</gene>
<accession>Q9KVC5</accession>
<name>FPG_VIBCH</name>